<dbReference type="EC" id="6.3.4.2" evidence="2"/>
<dbReference type="EMBL" id="AE005674">
    <property type="protein sequence ID" value="AAN44283.1"/>
    <property type="molecule type" value="Genomic_DNA"/>
</dbReference>
<dbReference type="EMBL" id="AE014073">
    <property type="protein sequence ID" value="AAP18108.1"/>
    <property type="molecule type" value="Genomic_DNA"/>
</dbReference>
<dbReference type="RefSeq" id="NP_708576.1">
    <property type="nucleotide sequence ID" value="NC_004337.2"/>
</dbReference>
<dbReference type="RefSeq" id="WP_000210878.1">
    <property type="nucleotide sequence ID" value="NZ_WPGW01000063.1"/>
</dbReference>
<dbReference type="SMR" id="P0A7E8"/>
<dbReference type="STRING" id="198214.SF2795"/>
<dbReference type="PaxDb" id="198214-SF2795"/>
<dbReference type="GeneID" id="1025760"/>
<dbReference type="GeneID" id="93779218"/>
<dbReference type="KEGG" id="sfl:SF2795"/>
<dbReference type="KEGG" id="sfx:S2989"/>
<dbReference type="PATRIC" id="fig|198214.7.peg.3328"/>
<dbReference type="HOGENOM" id="CLU_011675_5_0_6"/>
<dbReference type="UniPathway" id="UPA00159">
    <property type="reaction ID" value="UER00277"/>
</dbReference>
<dbReference type="Proteomes" id="UP000001006">
    <property type="component" value="Chromosome"/>
</dbReference>
<dbReference type="Proteomes" id="UP000002673">
    <property type="component" value="Chromosome"/>
</dbReference>
<dbReference type="GO" id="GO:0005829">
    <property type="term" value="C:cytosol"/>
    <property type="evidence" value="ECO:0007669"/>
    <property type="project" value="TreeGrafter"/>
</dbReference>
<dbReference type="GO" id="GO:0005524">
    <property type="term" value="F:ATP binding"/>
    <property type="evidence" value="ECO:0007669"/>
    <property type="project" value="UniProtKB-KW"/>
</dbReference>
<dbReference type="GO" id="GO:0003883">
    <property type="term" value="F:CTP synthase activity"/>
    <property type="evidence" value="ECO:0007669"/>
    <property type="project" value="UniProtKB-UniRule"/>
</dbReference>
<dbReference type="GO" id="GO:0004359">
    <property type="term" value="F:glutaminase activity"/>
    <property type="evidence" value="ECO:0007669"/>
    <property type="project" value="RHEA"/>
</dbReference>
<dbReference type="GO" id="GO:0042802">
    <property type="term" value="F:identical protein binding"/>
    <property type="evidence" value="ECO:0007669"/>
    <property type="project" value="TreeGrafter"/>
</dbReference>
<dbReference type="GO" id="GO:0046872">
    <property type="term" value="F:metal ion binding"/>
    <property type="evidence" value="ECO:0007669"/>
    <property type="project" value="UniProtKB-KW"/>
</dbReference>
<dbReference type="GO" id="GO:0044210">
    <property type="term" value="P:'de novo' CTP biosynthetic process"/>
    <property type="evidence" value="ECO:0007669"/>
    <property type="project" value="UniProtKB-UniRule"/>
</dbReference>
<dbReference type="GO" id="GO:0019856">
    <property type="term" value="P:pyrimidine nucleobase biosynthetic process"/>
    <property type="evidence" value="ECO:0007669"/>
    <property type="project" value="TreeGrafter"/>
</dbReference>
<dbReference type="CDD" id="cd03113">
    <property type="entry name" value="CTPS_N"/>
    <property type="match status" value="1"/>
</dbReference>
<dbReference type="CDD" id="cd01746">
    <property type="entry name" value="GATase1_CTP_Synthase"/>
    <property type="match status" value="1"/>
</dbReference>
<dbReference type="FunFam" id="3.40.50.300:FF:000009">
    <property type="entry name" value="CTP synthase"/>
    <property type="match status" value="1"/>
</dbReference>
<dbReference type="FunFam" id="3.40.50.880:FF:000002">
    <property type="entry name" value="CTP synthase"/>
    <property type="match status" value="1"/>
</dbReference>
<dbReference type="Gene3D" id="3.40.50.880">
    <property type="match status" value="1"/>
</dbReference>
<dbReference type="Gene3D" id="3.40.50.300">
    <property type="entry name" value="P-loop containing nucleotide triphosphate hydrolases"/>
    <property type="match status" value="1"/>
</dbReference>
<dbReference type="HAMAP" id="MF_01227">
    <property type="entry name" value="PyrG"/>
    <property type="match status" value="1"/>
</dbReference>
<dbReference type="InterPro" id="IPR029062">
    <property type="entry name" value="Class_I_gatase-like"/>
</dbReference>
<dbReference type="InterPro" id="IPR004468">
    <property type="entry name" value="CTP_synthase"/>
</dbReference>
<dbReference type="InterPro" id="IPR017456">
    <property type="entry name" value="CTP_synthase_N"/>
</dbReference>
<dbReference type="InterPro" id="IPR017926">
    <property type="entry name" value="GATASE"/>
</dbReference>
<dbReference type="InterPro" id="IPR033828">
    <property type="entry name" value="GATase1_CTP_Synthase"/>
</dbReference>
<dbReference type="InterPro" id="IPR027417">
    <property type="entry name" value="P-loop_NTPase"/>
</dbReference>
<dbReference type="NCBIfam" id="NF003792">
    <property type="entry name" value="PRK05380.1"/>
    <property type="match status" value="1"/>
</dbReference>
<dbReference type="NCBIfam" id="TIGR00337">
    <property type="entry name" value="PyrG"/>
    <property type="match status" value="1"/>
</dbReference>
<dbReference type="PANTHER" id="PTHR11550">
    <property type="entry name" value="CTP SYNTHASE"/>
    <property type="match status" value="1"/>
</dbReference>
<dbReference type="PANTHER" id="PTHR11550:SF0">
    <property type="entry name" value="CTP SYNTHASE-RELATED"/>
    <property type="match status" value="1"/>
</dbReference>
<dbReference type="Pfam" id="PF06418">
    <property type="entry name" value="CTP_synth_N"/>
    <property type="match status" value="1"/>
</dbReference>
<dbReference type="Pfam" id="PF00117">
    <property type="entry name" value="GATase"/>
    <property type="match status" value="1"/>
</dbReference>
<dbReference type="SUPFAM" id="SSF52317">
    <property type="entry name" value="Class I glutamine amidotransferase-like"/>
    <property type="match status" value="1"/>
</dbReference>
<dbReference type="SUPFAM" id="SSF52540">
    <property type="entry name" value="P-loop containing nucleoside triphosphate hydrolases"/>
    <property type="match status" value="1"/>
</dbReference>
<dbReference type="PROSITE" id="PS51273">
    <property type="entry name" value="GATASE_TYPE_1"/>
    <property type="match status" value="1"/>
</dbReference>
<name>PYRG_SHIFL</name>
<gene>
    <name evidence="2" type="primary">pyrG</name>
    <name type="ordered locus">SF2795</name>
    <name type="ordered locus">S2989</name>
</gene>
<feature type="initiator methionine" description="Removed" evidence="1">
    <location>
        <position position="1"/>
    </location>
</feature>
<feature type="chain" id="PRO_0000138220" description="CTP synthase">
    <location>
        <begin position="2"/>
        <end position="545"/>
    </location>
</feature>
<feature type="domain" description="Glutamine amidotransferase type-1" evidence="2">
    <location>
        <begin position="291"/>
        <end position="542"/>
    </location>
</feature>
<feature type="region of interest" description="Amidoligase domain" evidence="2">
    <location>
        <begin position="2"/>
        <end position="266"/>
    </location>
</feature>
<feature type="active site" description="Nucleophile; for glutamine hydrolysis" evidence="2">
    <location>
        <position position="379"/>
    </location>
</feature>
<feature type="active site" evidence="2">
    <location>
        <position position="515"/>
    </location>
</feature>
<feature type="active site" evidence="2">
    <location>
        <position position="517"/>
    </location>
</feature>
<feature type="binding site" evidence="2">
    <location>
        <position position="14"/>
    </location>
    <ligand>
        <name>CTP</name>
        <dbReference type="ChEBI" id="CHEBI:37563"/>
        <note>allosteric inhibitor</note>
    </ligand>
</feature>
<feature type="binding site" evidence="2">
    <location>
        <position position="14"/>
    </location>
    <ligand>
        <name>UTP</name>
        <dbReference type="ChEBI" id="CHEBI:46398"/>
    </ligand>
</feature>
<feature type="binding site" evidence="2">
    <location>
        <begin position="15"/>
        <end position="20"/>
    </location>
    <ligand>
        <name>ATP</name>
        <dbReference type="ChEBI" id="CHEBI:30616"/>
    </ligand>
</feature>
<feature type="binding site" evidence="2">
    <location>
        <position position="72"/>
    </location>
    <ligand>
        <name>ATP</name>
        <dbReference type="ChEBI" id="CHEBI:30616"/>
    </ligand>
</feature>
<feature type="binding site" evidence="2">
    <location>
        <position position="72"/>
    </location>
    <ligand>
        <name>Mg(2+)</name>
        <dbReference type="ChEBI" id="CHEBI:18420"/>
    </ligand>
</feature>
<feature type="binding site" evidence="2">
    <location>
        <position position="140"/>
    </location>
    <ligand>
        <name>Mg(2+)</name>
        <dbReference type="ChEBI" id="CHEBI:18420"/>
    </ligand>
</feature>
<feature type="binding site" evidence="2">
    <location>
        <begin position="147"/>
        <end position="149"/>
    </location>
    <ligand>
        <name>CTP</name>
        <dbReference type="ChEBI" id="CHEBI:37563"/>
        <note>allosteric inhibitor</note>
    </ligand>
</feature>
<feature type="binding site" evidence="2">
    <location>
        <begin position="187"/>
        <end position="192"/>
    </location>
    <ligand>
        <name>CTP</name>
        <dbReference type="ChEBI" id="CHEBI:37563"/>
        <note>allosteric inhibitor</note>
    </ligand>
</feature>
<feature type="binding site" evidence="2">
    <location>
        <begin position="187"/>
        <end position="192"/>
    </location>
    <ligand>
        <name>UTP</name>
        <dbReference type="ChEBI" id="CHEBI:46398"/>
    </ligand>
</feature>
<feature type="binding site" evidence="2">
    <location>
        <position position="223"/>
    </location>
    <ligand>
        <name>CTP</name>
        <dbReference type="ChEBI" id="CHEBI:37563"/>
        <note>allosteric inhibitor</note>
    </ligand>
</feature>
<feature type="binding site" evidence="2">
    <location>
        <position position="223"/>
    </location>
    <ligand>
        <name>UTP</name>
        <dbReference type="ChEBI" id="CHEBI:46398"/>
    </ligand>
</feature>
<feature type="binding site" evidence="2">
    <location>
        <begin position="239"/>
        <end position="241"/>
    </location>
    <ligand>
        <name>ATP</name>
        <dbReference type="ChEBI" id="CHEBI:30616"/>
    </ligand>
</feature>
<feature type="binding site" evidence="2">
    <location>
        <position position="352"/>
    </location>
    <ligand>
        <name>L-glutamine</name>
        <dbReference type="ChEBI" id="CHEBI:58359"/>
    </ligand>
</feature>
<feature type="binding site" evidence="2">
    <location>
        <begin position="380"/>
        <end position="383"/>
    </location>
    <ligand>
        <name>L-glutamine</name>
        <dbReference type="ChEBI" id="CHEBI:58359"/>
    </ligand>
</feature>
<feature type="binding site" evidence="2">
    <location>
        <position position="403"/>
    </location>
    <ligand>
        <name>L-glutamine</name>
        <dbReference type="ChEBI" id="CHEBI:58359"/>
    </ligand>
</feature>
<feature type="binding site" evidence="2">
    <location>
        <position position="470"/>
    </location>
    <ligand>
        <name>L-glutamine</name>
        <dbReference type="ChEBI" id="CHEBI:58359"/>
    </ligand>
</feature>
<accession>P0A7E8</accession>
<accession>P08398</accession>
<comment type="function">
    <text evidence="2">Catalyzes the ATP-dependent amination of UTP to CTP with either L-glutamine or ammonia as the source of nitrogen. Regulates intracellular CTP levels through interactions with the four ribonucleotide triphosphates.</text>
</comment>
<comment type="catalytic activity">
    <reaction evidence="2">
        <text>UTP + L-glutamine + ATP + H2O = CTP + L-glutamate + ADP + phosphate + 2 H(+)</text>
        <dbReference type="Rhea" id="RHEA:26426"/>
        <dbReference type="ChEBI" id="CHEBI:15377"/>
        <dbReference type="ChEBI" id="CHEBI:15378"/>
        <dbReference type="ChEBI" id="CHEBI:29985"/>
        <dbReference type="ChEBI" id="CHEBI:30616"/>
        <dbReference type="ChEBI" id="CHEBI:37563"/>
        <dbReference type="ChEBI" id="CHEBI:43474"/>
        <dbReference type="ChEBI" id="CHEBI:46398"/>
        <dbReference type="ChEBI" id="CHEBI:58359"/>
        <dbReference type="ChEBI" id="CHEBI:456216"/>
        <dbReference type="EC" id="6.3.4.2"/>
    </reaction>
</comment>
<comment type="catalytic activity">
    <reaction evidence="2">
        <text>L-glutamine + H2O = L-glutamate + NH4(+)</text>
        <dbReference type="Rhea" id="RHEA:15889"/>
        <dbReference type="ChEBI" id="CHEBI:15377"/>
        <dbReference type="ChEBI" id="CHEBI:28938"/>
        <dbReference type="ChEBI" id="CHEBI:29985"/>
        <dbReference type="ChEBI" id="CHEBI:58359"/>
    </reaction>
</comment>
<comment type="catalytic activity">
    <reaction evidence="2">
        <text>UTP + NH4(+) + ATP = CTP + ADP + phosphate + 2 H(+)</text>
        <dbReference type="Rhea" id="RHEA:16597"/>
        <dbReference type="ChEBI" id="CHEBI:15378"/>
        <dbReference type="ChEBI" id="CHEBI:28938"/>
        <dbReference type="ChEBI" id="CHEBI:30616"/>
        <dbReference type="ChEBI" id="CHEBI:37563"/>
        <dbReference type="ChEBI" id="CHEBI:43474"/>
        <dbReference type="ChEBI" id="CHEBI:46398"/>
        <dbReference type="ChEBI" id="CHEBI:456216"/>
    </reaction>
</comment>
<comment type="activity regulation">
    <text evidence="2">Allosterically activated by GTP, when glutamine is the substrate; GTP has no effect on the reaction when ammonia is the substrate. The allosteric effector GTP functions by stabilizing the protein conformation that binds the tetrahedral intermediate(s) formed during glutamine hydrolysis. Inhibited by the product CTP, via allosteric rather than competitive inhibition.</text>
</comment>
<comment type="pathway">
    <text evidence="2">Pyrimidine metabolism; CTP biosynthesis via de novo pathway; CTP from UDP: step 2/2.</text>
</comment>
<comment type="subunit">
    <text evidence="2">Homotetramer.</text>
</comment>
<comment type="miscellaneous">
    <text evidence="2">CTPSs have evolved a hybrid strategy for distinguishing between UTP and CTP. The overlapping regions of the product feedback inhibitory and substrate sites recognize a common feature in both compounds, the triphosphate moiety. To differentiate isosteric substrate and product pyrimidine rings, an additional pocket far from the expected kinase/ligase catalytic site, specifically recognizes the cytosine and ribose portions of the product inhibitor.</text>
</comment>
<comment type="similarity">
    <text evidence="2">Belongs to the CTP synthase family.</text>
</comment>
<reference key="1">
    <citation type="journal article" date="2002" name="Nucleic Acids Res.">
        <title>Genome sequence of Shigella flexneri 2a: insights into pathogenicity through comparison with genomes of Escherichia coli K12 and O157.</title>
        <authorList>
            <person name="Jin Q."/>
            <person name="Yuan Z."/>
            <person name="Xu J."/>
            <person name="Wang Y."/>
            <person name="Shen Y."/>
            <person name="Lu W."/>
            <person name="Wang J."/>
            <person name="Liu H."/>
            <person name="Yang J."/>
            <person name="Yang F."/>
            <person name="Zhang X."/>
            <person name="Zhang J."/>
            <person name="Yang G."/>
            <person name="Wu H."/>
            <person name="Qu D."/>
            <person name="Dong J."/>
            <person name="Sun L."/>
            <person name="Xue Y."/>
            <person name="Zhao A."/>
            <person name="Gao Y."/>
            <person name="Zhu J."/>
            <person name="Kan B."/>
            <person name="Ding K."/>
            <person name="Chen S."/>
            <person name="Cheng H."/>
            <person name="Yao Z."/>
            <person name="He B."/>
            <person name="Chen R."/>
            <person name="Ma D."/>
            <person name="Qiang B."/>
            <person name="Wen Y."/>
            <person name="Hou Y."/>
            <person name="Yu J."/>
        </authorList>
    </citation>
    <scope>NUCLEOTIDE SEQUENCE [LARGE SCALE GENOMIC DNA]</scope>
    <source>
        <strain>301 / Serotype 2a</strain>
    </source>
</reference>
<reference key="2">
    <citation type="journal article" date="2003" name="Infect. Immun.">
        <title>Complete genome sequence and comparative genomics of Shigella flexneri serotype 2a strain 2457T.</title>
        <authorList>
            <person name="Wei J."/>
            <person name="Goldberg M.B."/>
            <person name="Burland V."/>
            <person name="Venkatesan M.M."/>
            <person name="Deng W."/>
            <person name="Fournier G."/>
            <person name="Mayhew G.F."/>
            <person name="Plunkett G. III"/>
            <person name="Rose D.J."/>
            <person name="Darling A."/>
            <person name="Mau B."/>
            <person name="Perna N.T."/>
            <person name="Payne S.M."/>
            <person name="Runyen-Janecky L.J."/>
            <person name="Zhou S."/>
            <person name="Schwartz D.C."/>
            <person name="Blattner F.R."/>
        </authorList>
    </citation>
    <scope>NUCLEOTIDE SEQUENCE [LARGE SCALE GENOMIC DNA]</scope>
    <source>
        <strain>ATCC 700930 / 2457T / Serotype 2a</strain>
    </source>
</reference>
<organism>
    <name type="scientific">Shigella flexneri</name>
    <dbReference type="NCBI Taxonomy" id="623"/>
    <lineage>
        <taxon>Bacteria</taxon>
        <taxon>Pseudomonadati</taxon>
        <taxon>Pseudomonadota</taxon>
        <taxon>Gammaproteobacteria</taxon>
        <taxon>Enterobacterales</taxon>
        <taxon>Enterobacteriaceae</taxon>
        <taxon>Shigella</taxon>
    </lineage>
</organism>
<protein>
    <recommendedName>
        <fullName evidence="2">CTP synthase</fullName>
        <ecNumber evidence="2">6.3.4.2</ecNumber>
    </recommendedName>
    <alternativeName>
        <fullName evidence="2">Cytidine 5'-triphosphate synthase</fullName>
    </alternativeName>
    <alternativeName>
        <fullName evidence="2">Cytidine triphosphate synthetase</fullName>
        <shortName evidence="2">CTP synthetase</shortName>
        <shortName evidence="2">CTPS</shortName>
    </alternativeName>
    <alternativeName>
        <fullName evidence="2">UTP--ammonia ligase</fullName>
    </alternativeName>
</protein>
<evidence type="ECO:0000250" key="1"/>
<evidence type="ECO:0000255" key="2">
    <source>
        <dbReference type="HAMAP-Rule" id="MF_01227"/>
    </source>
</evidence>
<sequence>MTTNYIFVTGGVVSSLGKGIAAASLAAILEARGLNVTIMKLDPYINVDPGTMSPIQHGEVFVTEDGAETDLDLGHYERFIRTKMSRRNNFTTGRIYSDVLRKERRGDYLGATVQVIPHITNAIKERVLEGGEGHDVVLVEIGGTVGDIESLPFLEAIRQMAVEIGREHTLFMHLTLVPYMAASGEVKTKPTQHSVKELLSIGIQPDILICRSDRAVPANERAKIALFCNVPEKAVISLKDVDSIYKIPGLLKSQGLDDYICKRFSLNCPEANLSEWEQVIFEEANPVSEVTIGMVGKYIELPDAYKSVIEALKHGGLKNRVSVNIKLIDSQDVETRGVEILKGLDAILVPGGFGYRGVEGMITTARFARENNIPYLGICLGMQVALIDYARHVANMENANSTEFVPDCKYPVVALITEWRDENGNVEVRSEKSDLGGTMRLGAQQCQLVDDSLVRQLYNAPTIVERHRHRYEVNNMLLKQIEDAGLRVAGRSGDDQLVEIIEVPNHPWFVACQFHPEFTSTPRDGHPLFAGFVKAASEFQKRQAK</sequence>
<keyword id="KW-0067">ATP-binding</keyword>
<keyword id="KW-0315">Glutamine amidotransferase</keyword>
<keyword id="KW-0436">Ligase</keyword>
<keyword id="KW-0460">Magnesium</keyword>
<keyword id="KW-0479">Metal-binding</keyword>
<keyword id="KW-0547">Nucleotide-binding</keyword>
<keyword id="KW-0665">Pyrimidine biosynthesis</keyword>
<keyword id="KW-1185">Reference proteome</keyword>
<proteinExistence type="inferred from homology"/>